<sequence length="312" mass="35141">MELHIWPSDFGLPTIDVSSLQFLACSKMCASPVRVVQSARPWRSPNGELPMVAQIDGNAKPVTDFEKFVDILKKCGQDVVIDADLTTIERAQLDAFSCYLHHNLYPAVLHTFWADDLNYNTVTQYWYASHLHFPYNLYYLEKRKKKALRMLGGKNDTEILKDAFMALNTLSTKLGDNKFFCGNKPTSLDALVFGYLAPLLRVPLPNDRLQVQLSACPNLVRFVETVSSIYLPLSEDELKRQQSNRKMWQSRISKAKADKEAAKTTEEAAEAIPDEPPMRDAILFTIGALVLSVAFAIHTGLIQVSVEEEIAE</sequence>
<gene>
    <name evidence="5" type="primary">mtx-1</name>
    <name type="ORF">CBG19767</name>
</gene>
<keyword id="KW-0472">Membrane</keyword>
<keyword id="KW-0496">Mitochondrion</keyword>
<keyword id="KW-1000">Mitochondrion outer membrane</keyword>
<keyword id="KW-0653">Protein transport</keyword>
<keyword id="KW-1185">Reference proteome</keyword>
<keyword id="KW-0812">Transmembrane</keyword>
<keyword id="KW-1133">Transmembrane helix</keyword>
<keyword id="KW-0813">Transport</keyword>
<accession>A8XWD1</accession>
<protein>
    <recommendedName>
        <fullName evidence="1">Metaxin-1 homolog</fullName>
    </recommendedName>
    <alternativeName>
        <fullName>Mitochondrial outer membrane import complex protein 1</fullName>
    </alternativeName>
</protein>
<feature type="chain" id="PRO_0000367042" description="Metaxin-1 homolog">
    <location>
        <begin position="1"/>
        <end position="312"/>
    </location>
</feature>
<feature type="transmembrane region" description="Helical" evidence="4">
    <location>
        <begin position="282"/>
        <end position="302"/>
    </location>
</feature>
<proteinExistence type="inferred from homology"/>
<organism>
    <name type="scientific">Caenorhabditis briggsae</name>
    <dbReference type="NCBI Taxonomy" id="6238"/>
    <lineage>
        <taxon>Eukaryota</taxon>
        <taxon>Metazoa</taxon>
        <taxon>Ecdysozoa</taxon>
        <taxon>Nematoda</taxon>
        <taxon>Chromadorea</taxon>
        <taxon>Rhabditida</taxon>
        <taxon>Rhabditina</taxon>
        <taxon>Rhabditomorpha</taxon>
        <taxon>Rhabditoidea</taxon>
        <taxon>Rhabditidae</taxon>
        <taxon>Peloderinae</taxon>
        <taxon>Caenorhabditis</taxon>
    </lineage>
</organism>
<evidence type="ECO:0000250" key="1">
    <source>
        <dbReference type="UniProtKB" id="O45503"/>
    </source>
</evidence>
<evidence type="ECO:0000250" key="2">
    <source>
        <dbReference type="UniProtKB" id="P47802"/>
    </source>
</evidence>
<evidence type="ECO:0000250" key="3">
    <source>
        <dbReference type="UniProtKB" id="Q13505"/>
    </source>
</evidence>
<evidence type="ECO:0000255" key="4"/>
<evidence type="ECO:0000312" key="5">
    <source>
        <dbReference type="EMBL" id="CAP36950.1"/>
    </source>
</evidence>
<reference evidence="5" key="1">
    <citation type="journal article" date="2003" name="PLoS Biol.">
        <title>The genome sequence of Caenorhabditis briggsae: a platform for comparative genomics.</title>
        <authorList>
            <person name="Stein L.D."/>
            <person name="Bao Z."/>
            <person name="Blasiar D."/>
            <person name="Blumenthal T."/>
            <person name="Brent M.R."/>
            <person name="Chen N."/>
            <person name="Chinwalla A."/>
            <person name="Clarke L."/>
            <person name="Clee C."/>
            <person name="Coghlan A."/>
            <person name="Coulson A."/>
            <person name="D'Eustachio P."/>
            <person name="Fitch D.H.A."/>
            <person name="Fulton L.A."/>
            <person name="Fulton R.E."/>
            <person name="Griffiths-Jones S."/>
            <person name="Harris T.W."/>
            <person name="Hillier L.W."/>
            <person name="Kamath R."/>
            <person name="Kuwabara P.E."/>
            <person name="Mardis E.R."/>
            <person name="Marra M.A."/>
            <person name="Miner T.L."/>
            <person name="Minx P."/>
            <person name="Mullikin J.C."/>
            <person name="Plumb R.W."/>
            <person name="Rogers J."/>
            <person name="Schein J.E."/>
            <person name="Sohrmann M."/>
            <person name="Spieth J."/>
            <person name="Stajich J.E."/>
            <person name="Wei C."/>
            <person name="Willey D."/>
            <person name="Wilson R.K."/>
            <person name="Durbin R.M."/>
            <person name="Waterston R.H."/>
        </authorList>
    </citation>
    <scope>NUCLEOTIDE SEQUENCE [LARGE SCALE GENOMIC DNA]</scope>
    <source>
        <strain evidence="5">AF16</strain>
    </source>
</reference>
<dbReference type="EMBL" id="HE601474">
    <property type="protein sequence ID" value="CAP36950.1"/>
    <property type="molecule type" value="Genomic_DNA"/>
</dbReference>
<dbReference type="SMR" id="A8XWD1"/>
<dbReference type="FunCoup" id="A8XWD1">
    <property type="interactions" value="3036"/>
</dbReference>
<dbReference type="STRING" id="6238.A8XWD1"/>
<dbReference type="EnsemblMetazoa" id="CBG19767.1">
    <property type="protein sequence ID" value="CBG19767.1"/>
    <property type="gene ID" value="WBGene00038933"/>
</dbReference>
<dbReference type="KEGG" id="cbr:CBG_19767"/>
<dbReference type="CTD" id="8582696"/>
<dbReference type="WormBase" id="CBG19767">
    <property type="protein sequence ID" value="CBP04636"/>
    <property type="gene ID" value="WBGene00038933"/>
    <property type="gene designation" value="Cbr-mtx-1"/>
</dbReference>
<dbReference type="eggNOG" id="KOG3028">
    <property type="taxonomic scope" value="Eukaryota"/>
</dbReference>
<dbReference type="HOGENOM" id="CLU_044137_5_0_1"/>
<dbReference type="InParanoid" id="A8XWD1"/>
<dbReference type="OMA" id="FPYNLYY"/>
<dbReference type="Proteomes" id="UP000008549">
    <property type="component" value="Unassembled WGS sequence"/>
</dbReference>
<dbReference type="GO" id="GO:0005737">
    <property type="term" value="C:cytoplasm"/>
    <property type="evidence" value="ECO:0000318"/>
    <property type="project" value="GO_Central"/>
</dbReference>
<dbReference type="GO" id="GO:0001401">
    <property type="term" value="C:SAM complex"/>
    <property type="evidence" value="ECO:0000318"/>
    <property type="project" value="GO_Central"/>
</dbReference>
<dbReference type="GO" id="GO:0007005">
    <property type="term" value="P:mitochondrion organization"/>
    <property type="evidence" value="ECO:0000318"/>
    <property type="project" value="GO_Central"/>
</dbReference>
<dbReference type="GO" id="GO:0015031">
    <property type="term" value="P:protein transport"/>
    <property type="evidence" value="ECO:0007669"/>
    <property type="project" value="UniProtKB-KW"/>
</dbReference>
<dbReference type="CDD" id="cd03212">
    <property type="entry name" value="GST_C_Metaxin1_3"/>
    <property type="match status" value="1"/>
</dbReference>
<dbReference type="CDD" id="cd03078">
    <property type="entry name" value="GST_N_Metaxin1_like"/>
    <property type="match status" value="1"/>
</dbReference>
<dbReference type="Gene3D" id="1.20.1050.10">
    <property type="match status" value="1"/>
</dbReference>
<dbReference type="InterPro" id="IPR010987">
    <property type="entry name" value="Glutathione-S-Trfase_C-like"/>
</dbReference>
<dbReference type="InterPro" id="IPR036282">
    <property type="entry name" value="Glutathione-S-Trfase_C_sf"/>
</dbReference>
<dbReference type="InterPro" id="IPR017410">
    <property type="entry name" value="Metaxin1/3"/>
</dbReference>
<dbReference type="InterPro" id="IPR033468">
    <property type="entry name" value="Metaxin_GST"/>
</dbReference>
<dbReference type="InterPro" id="IPR050931">
    <property type="entry name" value="Mito_Protein_Transport_Metaxin"/>
</dbReference>
<dbReference type="InterPro" id="IPR019564">
    <property type="entry name" value="Sam37/metaxin_N"/>
</dbReference>
<dbReference type="PANTHER" id="PTHR12289:SF41">
    <property type="entry name" value="FAILED AXON CONNECTIONS-RELATED"/>
    <property type="match status" value="1"/>
</dbReference>
<dbReference type="PANTHER" id="PTHR12289">
    <property type="entry name" value="METAXIN RELATED"/>
    <property type="match status" value="1"/>
</dbReference>
<dbReference type="Pfam" id="PF17171">
    <property type="entry name" value="GST_C_6"/>
    <property type="match status" value="1"/>
</dbReference>
<dbReference type="Pfam" id="PF10568">
    <property type="entry name" value="Tom37"/>
    <property type="match status" value="1"/>
</dbReference>
<dbReference type="PIRSF" id="PIRSF038150">
    <property type="entry name" value="Metaxin"/>
    <property type="match status" value="1"/>
</dbReference>
<dbReference type="SUPFAM" id="SSF47616">
    <property type="entry name" value="GST C-terminal domain-like"/>
    <property type="match status" value="1"/>
</dbReference>
<name>MTX1_CAEBR</name>
<comment type="function">
    <text evidence="2">Involved in transport of proteins into the mitochondrion. Essential for embryonic development (By similarity).</text>
</comment>
<comment type="subunit">
    <text evidence="3">Associates with the mitochondrial contact site and cristae organizing system (MICOS) complex (also known as MINOS or MitOS complex).</text>
</comment>
<comment type="subcellular location">
    <subcellularLocation>
        <location evidence="2">Mitochondrion outer membrane</location>
    </subcellularLocation>
</comment>
<comment type="similarity">
    <text evidence="4">Belongs to the metaxin family.</text>
</comment>